<evidence type="ECO:0000255" key="1">
    <source>
        <dbReference type="HAMAP-Rule" id="MF_01169"/>
    </source>
</evidence>
<organism>
    <name type="scientific">Staphylococcus aureus (strain N315)</name>
    <dbReference type="NCBI Taxonomy" id="158879"/>
    <lineage>
        <taxon>Bacteria</taxon>
        <taxon>Bacillati</taxon>
        <taxon>Bacillota</taxon>
        <taxon>Bacilli</taxon>
        <taxon>Bacillales</taxon>
        <taxon>Staphylococcaceae</taxon>
        <taxon>Staphylococcus</taxon>
    </lineage>
</organism>
<name>ODO1_STAAN</name>
<accession>Q99U74</accession>
<feature type="chain" id="PRO_0000162178" description="2-oxoglutarate dehydrogenase E1 component">
    <location>
        <begin position="1"/>
        <end position="910"/>
    </location>
</feature>
<comment type="function">
    <text evidence="1">E1 component of the 2-oxoglutarate dehydrogenase (OGDH) complex which catalyzes the decarboxylation of 2-oxoglutarate, the first step in the conversion of 2-oxoglutarate to succinyl-CoA and CO(2).</text>
</comment>
<comment type="catalytic activity">
    <reaction evidence="1">
        <text>N(6)-[(R)-lipoyl]-L-lysyl-[protein] + 2-oxoglutarate + H(+) = N(6)-[(R)-S(8)-succinyldihydrolipoyl]-L-lysyl-[protein] + CO2</text>
        <dbReference type="Rhea" id="RHEA:12188"/>
        <dbReference type="Rhea" id="RHEA-COMP:10474"/>
        <dbReference type="Rhea" id="RHEA-COMP:20092"/>
        <dbReference type="ChEBI" id="CHEBI:15378"/>
        <dbReference type="ChEBI" id="CHEBI:16526"/>
        <dbReference type="ChEBI" id="CHEBI:16810"/>
        <dbReference type="ChEBI" id="CHEBI:83099"/>
        <dbReference type="ChEBI" id="CHEBI:83120"/>
        <dbReference type="EC" id="1.2.4.2"/>
    </reaction>
</comment>
<comment type="cofactor">
    <cofactor evidence="1">
        <name>thiamine diphosphate</name>
        <dbReference type="ChEBI" id="CHEBI:58937"/>
    </cofactor>
</comment>
<comment type="subunit">
    <text evidence="1">Homodimer. Part of the 2-oxoglutarate dehydrogenase (OGDH) complex composed of E1 (2-oxoglutarate dehydrogenase), E2 (dihydrolipoamide succinyltransferase) and E3 (dihydrolipoamide dehydrogenase); the complex contains multiple copies of the three enzymatic components (E1, E2 and E3).</text>
</comment>
<comment type="similarity">
    <text evidence="1">Belongs to the alpha-ketoglutarate dehydrogenase family.</text>
</comment>
<proteinExistence type="evidence at protein level"/>
<sequence length="910" mass="103112">MTNERKEVSEAPVNFGANLGLMLDLYDDFLQDPSSVPEDLQVLFSTIKRVMRLIDNIRQYGHLKADIYPVNPPKRKHVPKLEIEDFDLDQQTLEGISAGIVSDHFADIYDNAYEAILRMEKRYKGPIAFEYTHINNNTERGWLKRRIETPYKVTLNNNEKRALFKQLAYVEGFEKYLHKNFVGAKRFSIEGVDALVPMLQRTITIAAKEGIKNIQIGMAHRGRLNVLTHVLEKPYEMMISEFMHTDPMKFLPEDGSLQLTAGWTGDVKYHLGGIKTTDSYGTMQRIALANNPSHLEIVAPVVEGRTRAAQDDTQRAGAPTTDHHKAMPIIIHGDAAYPGQGINFETMNLGNLKGYSTGGSLHIITNNRIGFTTEPIDARSTTYSTDVAKGYDVPIFHVNADDVEATIEAIDIAMEFRKEFHKDVVIDLVGYRRFGHNEMDEPSITNPVPYQNIRKHDSVEYVFGKKLVNEGVISEDEMHSFIEQVQKELRQAHDKINKADKMDNPDMEKPAELALPLQADEQSFTFDHLKEINDALLTYPDGFNILKKLNKVLEKRHEPFNKEDGLVDWAQAEQLAFATILQDGTPIRLTGQDSERGTFSHRHAVLHDEQTGETYTPLHHVPDQKATFDIHNSPLSEAAVVGFEYGYNVENKKSFNIWEAQYGDFANMSQMIFDNFLFSSRSKWGERSGLTLFLPHAYEGQGPEHSSARLERFLQLAAENNCTVVNLSSSSNYFHLLRAQAASLDSEQMRPLVVMSPKSLLRNKTVAKPIDEFTSGGFEPILTESYQADKVTKVILATGKMFIDLKEALAKNPDESVLLVAIERLYPFPEEEIEALLAQLPKLEEVSWVQEEPKNQGAWLYVYPYVKVLVADKYDLSYHGRIQRAAPAEGDGEIHKLVQNKIIENALKNN</sequence>
<dbReference type="EC" id="1.2.4.2" evidence="1"/>
<dbReference type="EMBL" id="BA000018">
    <property type="protein sequence ID" value="BAB42505.1"/>
    <property type="molecule type" value="Genomic_DNA"/>
</dbReference>
<dbReference type="PIR" id="E89918">
    <property type="entry name" value="E89918"/>
</dbReference>
<dbReference type="RefSeq" id="WP_000180688.1">
    <property type="nucleotide sequence ID" value="NC_002745.2"/>
</dbReference>
<dbReference type="SMR" id="Q99U74"/>
<dbReference type="EnsemblBacteria" id="BAB42505">
    <property type="protein sequence ID" value="BAB42505"/>
    <property type="gene ID" value="BAB42505"/>
</dbReference>
<dbReference type="KEGG" id="sau:SA1245"/>
<dbReference type="HOGENOM" id="CLU_004709_1_0_9"/>
<dbReference type="GO" id="GO:0005829">
    <property type="term" value="C:cytosol"/>
    <property type="evidence" value="ECO:0007669"/>
    <property type="project" value="TreeGrafter"/>
</dbReference>
<dbReference type="GO" id="GO:0045252">
    <property type="term" value="C:oxoglutarate dehydrogenase complex"/>
    <property type="evidence" value="ECO:0007669"/>
    <property type="project" value="TreeGrafter"/>
</dbReference>
<dbReference type="GO" id="GO:0004591">
    <property type="term" value="F:oxoglutarate dehydrogenase (succinyl-transferring) activity"/>
    <property type="evidence" value="ECO:0007669"/>
    <property type="project" value="UniProtKB-UniRule"/>
</dbReference>
<dbReference type="GO" id="GO:0030976">
    <property type="term" value="F:thiamine pyrophosphate binding"/>
    <property type="evidence" value="ECO:0007669"/>
    <property type="project" value="UniProtKB-UniRule"/>
</dbReference>
<dbReference type="GO" id="GO:0006096">
    <property type="term" value="P:glycolytic process"/>
    <property type="evidence" value="ECO:0007669"/>
    <property type="project" value="UniProtKB-UniRule"/>
</dbReference>
<dbReference type="GO" id="GO:0006099">
    <property type="term" value="P:tricarboxylic acid cycle"/>
    <property type="evidence" value="ECO:0007669"/>
    <property type="project" value="TreeGrafter"/>
</dbReference>
<dbReference type="CDD" id="cd02016">
    <property type="entry name" value="TPP_E1_OGDC_like"/>
    <property type="match status" value="1"/>
</dbReference>
<dbReference type="FunFam" id="3.40.50.11610:FF:000002">
    <property type="entry name" value="2-oxoglutarate dehydrogenase E1 component"/>
    <property type="match status" value="1"/>
</dbReference>
<dbReference type="FunFam" id="3.40.50.970:FF:000036">
    <property type="entry name" value="2-oxoglutarate dehydrogenase E1 component"/>
    <property type="match status" value="1"/>
</dbReference>
<dbReference type="Gene3D" id="3.40.50.12470">
    <property type="match status" value="1"/>
</dbReference>
<dbReference type="Gene3D" id="3.40.50.970">
    <property type="match status" value="1"/>
</dbReference>
<dbReference type="Gene3D" id="3.40.50.11610">
    <property type="entry name" value="Multifunctional 2-oxoglutarate metabolism enzyme, C-terminal domain"/>
    <property type="match status" value="1"/>
</dbReference>
<dbReference type="Gene3D" id="1.10.287.1150">
    <property type="entry name" value="TPP helical domain"/>
    <property type="match status" value="1"/>
</dbReference>
<dbReference type="HAMAP" id="MF_01169">
    <property type="entry name" value="SucA_OdhA"/>
    <property type="match status" value="1"/>
</dbReference>
<dbReference type="InterPro" id="IPR011603">
    <property type="entry name" value="2oxoglutarate_DH_E1"/>
</dbReference>
<dbReference type="InterPro" id="IPR023784">
    <property type="entry name" value="2oxoglutarate_DH_E1_bac"/>
</dbReference>
<dbReference type="InterPro" id="IPR001017">
    <property type="entry name" value="DH_E1"/>
</dbReference>
<dbReference type="InterPro" id="IPR042179">
    <property type="entry name" value="KGD_C_sf"/>
</dbReference>
<dbReference type="InterPro" id="IPR031717">
    <property type="entry name" value="ODO-1/KGD_C"/>
</dbReference>
<dbReference type="InterPro" id="IPR029061">
    <property type="entry name" value="THDP-binding"/>
</dbReference>
<dbReference type="InterPro" id="IPR005475">
    <property type="entry name" value="Transketolase-like_Pyr-bd"/>
</dbReference>
<dbReference type="NCBIfam" id="TIGR00239">
    <property type="entry name" value="2oxo_dh_E1"/>
    <property type="match status" value="1"/>
</dbReference>
<dbReference type="NCBIfam" id="NF006914">
    <property type="entry name" value="PRK09404.1"/>
    <property type="match status" value="1"/>
</dbReference>
<dbReference type="NCBIfam" id="NF008907">
    <property type="entry name" value="PRK12270.1"/>
    <property type="match status" value="1"/>
</dbReference>
<dbReference type="PANTHER" id="PTHR23152:SF4">
    <property type="entry name" value="2-OXOADIPATE DEHYDROGENASE COMPLEX COMPONENT E1"/>
    <property type="match status" value="1"/>
</dbReference>
<dbReference type="PANTHER" id="PTHR23152">
    <property type="entry name" value="2-OXOGLUTARATE DEHYDROGENASE"/>
    <property type="match status" value="1"/>
</dbReference>
<dbReference type="Pfam" id="PF00676">
    <property type="entry name" value="E1_dh"/>
    <property type="match status" value="1"/>
</dbReference>
<dbReference type="Pfam" id="PF16870">
    <property type="entry name" value="OxoGdeHyase_C"/>
    <property type="match status" value="1"/>
</dbReference>
<dbReference type="Pfam" id="PF02779">
    <property type="entry name" value="Transket_pyr"/>
    <property type="match status" value="1"/>
</dbReference>
<dbReference type="PIRSF" id="PIRSF000157">
    <property type="entry name" value="Oxoglu_dh_E1"/>
    <property type="match status" value="1"/>
</dbReference>
<dbReference type="SMART" id="SM00861">
    <property type="entry name" value="Transket_pyr"/>
    <property type="match status" value="1"/>
</dbReference>
<dbReference type="SUPFAM" id="SSF52518">
    <property type="entry name" value="Thiamin diphosphate-binding fold (THDP-binding)"/>
    <property type="match status" value="2"/>
</dbReference>
<reference key="1">
    <citation type="journal article" date="2001" name="Lancet">
        <title>Whole genome sequencing of meticillin-resistant Staphylococcus aureus.</title>
        <authorList>
            <person name="Kuroda M."/>
            <person name="Ohta T."/>
            <person name="Uchiyama I."/>
            <person name="Baba T."/>
            <person name="Yuzawa H."/>
            <person name="Kobayashi I."/>
            <person name="Cui L."/>
            <person name="Oguchi A."/>
            <person name="Aoki K."/>
            <person name="Nagai Y."/>
            <person name="Lian J.-Q."/>
            <person name="Ito T."/>
            <person name="Kanamori M."/>
            <person name="Matsumaru H."/>
            <person name="Maruyama A."/>
            <person name="Murakami H."/>
            <person name="Hosoyama A."/>
            <person name="Mizutani-Ui Y."/>
            <person name="Takahashi N.K."/>
            <person name="Sawano T."/>
            <person name="Inoue R."/>
            <person name="Kaito C."/>
            <person name="Sekimizu K."/>
            <person name="Hirakawa H."/>
            <person name="Kuhara S."/>
            <person name="Goto S."/>
            <person name="Yabuzaki J."/>
            <person name="Kanehisa M."/>
            <person name="Yamashita A."/>
            <person name="Oshima K."/>
            <person name="Furuya K."/>
            <person name="Yoshino C."/>
            <person name="Shiba T."/>
            <person name="Hattori M."/>
            <person name="Ogasawara N."/>
            <person name="Hayashi H."/>
            <person name="Hiramatsu K."/>
        </authorList>
    </citation>
    <scope>NUCLEOTIDE SEQUENCE [LARGE SCALE GENOMIC DNA]</scope>
    <source>
        <strain>N315</strain>
    </source>
</reference>
<reference key="2">
    <citation type="submission" date="2007-10" db="UniProtKB">
        <title>Shotgun proteomic analysis of total and membrane protein extracts of S. aureus strain N315.</title>
        <authorList>
            <person name="Vaezzadeh A.R."/>
            <person name="Deshusses J."/>
            <person name="Lescuyer P."/>
            <person name="Hochstrasser D.F."/>
        </authorList>
    </citation>
    <scope>IDENTIFICATION BY MASS SPECTROMETRY [LARGE SCALE ANALYSIS]</scope>
    <source>
        <strain>N315</strain>
    </source>
</reference>
<gene>
    <name evidence="1" type="primary">odhA</name>
    <name type="ordered locus">SA1245</name>
</gene>
<protein>
    <recommendedName>
        <fullName evidence="1">2-oxoglutarate dehydrogenase E1 component</fullName>
        <ecNumber evidence="1">1.2.4.2</ecNumber>
    </recommendedName>
    <alternativeName>
        <fullName evidence="1">Alpha-ketoglutarate dehydrogenase</fullName>
    </alternativeName>
</protein>
<keyword id="KW-0324">Glycolysis</keyword>
<keyword id="KW-0560">Oxidoreductase</keyword>
<keyword id="KW-0786">Thiamine pyrophosphate</keyword>